<name>BETT2_ACIAD</name>
<reference key="1">
    <citation type="journal article" date="2004" name="Nucleic Acids Res.">
        <title>Unique features revealed by the genome sequence of Acinetobacter sp. ADP1, a versatile and naturally transformation competent bacterium.</title>
        <authorList>
            <person name="Barbe V."/>
            <person name="Vallenet D."/>
            <person name="Fonknechten N."/>
            <person name="Kreimeyer A."/>
            <person name="Oztas S."/>
            <person name="Labarre L."/>
            <person name="Cruveiller S."/>
            <person name="Robert C."/>
            <person name="Duprat S."/>
            <person name="Wincker P."/>
            <person name="Ornston L.N."/>
            <person name="Weissenbach J."/>
            <person name="Marliere P."/>
            <person name="Cohen G.N."/>
            <person name="Medigue C."/>
        </authorList>
    </citation>
    <scope>NUCLEOTIDE SEQUENCE [LARGE SCALE GENOMIC DNA]</scope>
    <source>
        <strain>ATCC 33305 / BD413 / ADP1</strain>
    </source>
</reference>
<reference key="2">
    <citation type="journal article" date="2014" name="Environ. Microbiol.">
        <title>Identification of an osmo-dependent and an osmo-independent choline transporter in Acinetobacter baylyi: implications in osmostress protection and metabolic adaptation.</title>
        <authorList>
            <person name="Sand M."/>
            <person name="Stahl J."/>
            <person name="Waclawska I."/>
            <person name="Ziegler C."/>
            <person name="Averhoff B."/>
        </authorList>
    </citation>
    <scope>FUNCTION AS A TRANSPORTER</scope>
    <scope>SUBCELLULAR LOCATION</scope>
    <scope>DISRUPTION PHENOTYPE</scope>
    <source>
        <strain>ATCC 33305 / BD413 / ADP1</strain>
    </source>
</reference>
<evidence type="ECO:0000255" key="1"/>
<evidence type="ECO:0000269" key="2">
    <source>
    </source>
</evidence>
<evidence type="ECO:0000303" key="3">
    <source>
    </source>
</evidence>
<evidence type="ECO:0000305" key="4"/>
<evidence type="ECO:0000305" key="5">
    <source>
    </source>
</evidence>
<evidence type="ECO:0000312" key="6">
    <source>
        <dbReference type="EMBL" id="CAG67903.1"/>
    </source>
</evidence>
<feature type="chain" id="PRO_0000435019" description="Osmo-dependent choline transporter BetT2">
    <location>
        <begin position="1"/>
        <end position="686"/>
    </location>
</feature>
<feature type="topological domain" description="Cytoplasmic" evidence="5">
    <location>
        <begin position="1"/>
        <end position="22"/>
    </location>
</feature>
<feature type="transmembrane region" description="Helical" evidence="1">
    <location>
        <begin position="23"/>
        <end position="43"/>
    </location>
</feature>
<feature type="topological domain" description="Periplasmic" evidence="5">
    <location>
        <begin position="44"/>
        <end position="60"/>
    </location>
</feature>
<feature type="transmembrane region" description="Helical" evidence="1">
    <location>
        <begin position="61"/>
        <end position="81"/>
    </location>
</feature>
<feature type="topological domain" description="Cytoplasmic" evidence="5">
    <location>
        <begin position="82"/>
        <end position="100"/>
    </location>
</feature>
<feature type="transmembrane region" description="Helical" evidence="1">
    <location>
        <begin position="101"/>
        <end position="121"/>
    </location>
</feature>
<feature type="topological domain" description="Periplasmic" evidence="5">
    <location>
        <begin position="122"/>
        <end position="150"/>
    </location>
</feature>
<feature type="transmembrane region" description="Helical" evidence="1">
    <location>
        <begin position="151"/>
        <end position="171"/>
    </location>
</feature>
<feature type="topological domain" description="Cytoplasmic" evidence="5">
    <location>
        <begin position="172"/>
        <end position="203"/>
    </location>
</feature>
<feature type="transmembrane region" description="Helical" evidence="1">
    <location>
        <begin position="204"/>
        <end position="224"/>
    </location>
</feature>
<feature type="topological domain" description="Periplasmic" evidence="5">
    <location>
        <begin position="225"/>
        <end position="237"/>
    </location>
</feature>
<feature type="transmembrane region" description="Helical" evidence="1">
    <location>
        <begin position="238"/>
        <end position="258"/>
    </location>
</feature>
<feature type="topological domain" description="Cytoplasmic" evidence="5">
    <location>
        <begin position="259"/>
        <end position="265"/>
    </location>
</feature>
<feature type="transmembrane region" description="Helical" evidence="1">
    <location>
        <begin position="266"/>
        <end position="286"/>
    </location>
</feature>
<feature type="topological domain" description="Periplasmic" evidence="5">
    <location>
        <begin position="287"/>
        <end position="325"/>
    </location>
</feature>
<feature type="transmembrane region" description="Helical" evidence="1">
    <location>
        <begin position="326"/>
        <end position="346"/>
    </location>
</feature>
<feature type="topological domain" description="Cytoplasmic" evidence="5">
    <location>
        <begin position="347"/>
        <end position="356"/>
    </location>
</feature>
<feature type="transmembrane region" description="Helical" evidence="1">
    <location>
        <begin position="357"/>
        <end position="377"/>
    </location>
</feature>
<feature type="topological domain" description="Periplasmic" evidence="5">
    <location>
        <begin position="378"/>
        <end position="412"/>
    </location>
</feature>
<feature type="transmembrane region" description="Helical" evidence="1">
    <location>
        <begin position="413"/>
        <end position="433"/>
    </location>
</feature>
<feature type="topological domain" description="Cytoplasmic" evidence="5">
    <location>
        <begin position="434"/>
        <end position="459"/>
    </location>
</feature>
<feature type="transmembrane region" description="Helical" evidence="1">
    <location>
        <begin position="460"/>
        <end position="480"/>
    </location>
</feature>
<feature type="topological domain" description="Periplasmic" evidence="5">
    <location>
        <begin position="481"/>
        <end position="484"/>
    </location>
</feature>
<feature type="transmembrane region" description="Helical" evidence="1">
    <location>
        <begin position="485"/>
        <end position="505"/>
    </location>
</feature>
<feature type="topological domain" description="Cytoplasmic" evidence="5">
    <location>
        <begin position="506"/>
        <end position="686"/>
    </location>
</feature>
<sequence>MATDNPRAVDDQETHPKDRLNRVVFYVSALIILIFSLTTILFNDFANRALNQVLDWVSSTFSWYYLLAATLYMVFVIFIACSRYGNIKLGPKHSKPEFSLLSWSAMLFSAGIGIDLMFFSVAEPLSHYMHPPVGEGQTYEAARQGMVWTLFHYGLTGWCMYALIGMALGYFSYRYNLPLTIRSALYPIFGKKINGPIGHSVDTAAVIGTIFGIATTCGIGVVQLNYGLHVLFDLPENLWVQTALILVAVIITIISVTSGVNKGLRILSEVNIYVSVGLMLFILFLGNTEFLLNALVQNVGDYLSRFPSLALESFAFDQPKEWMNSWTLFFWAWWVAWSPFVGLFLARISRGRTIREFVSGTLIIPLLFTLTWLSIFGNSALHNVIFDGNIALAETVLSNPAHGFYDLLAQYPWFPFIAGVATITGLLFYVTSADSGALVLGNFTTQFTNIDHDAPRWLSVFWAVAIGLLTLAMLMTNGITALQNATIIMGLPFSFVMFLVMAGLYKSLRLEDYRQASASLNAAPVVGNVDILNWKKRLTRVMHHPGTFETKRMLNEICRPAVHAVAEELQKRAVQVDVLEVPLEEDEELYHLDITIHLEEEQNFIYQIWPVRYIAPNFSERGKRGKQFYYRLETYLYEGSQGNDLVGYTKEQVINDILDRYERHMTFLHINRISPGNRPLFPDPKA</sequence>
<gene>
    <name evidence="3" type="primary">betT2</name>
    <name evidence="6" type="synonym">betT</name>
    <name evidence="6" type="ordered locus">ACIAD1012</name>
</gene>
<organism>
    <name type="scientific">Acinetobacter baylyi (strain ATCC 33305 / BD413 / ADP1)</name>
    <dbReference type="NCBI Taxonomy" id="62977"/>
    <lineage>
        <taxon>Bacteria</taxon>
        <taxon>Pseudomonadati</taxon>
        <taxon>Pseudomonadota</taxon>
        <taxon>Gammaproteobacteria</taxon>
        <taxon>Moraxellales</taxon>
        <taxon>Moraxellaceae</taxon>
        <taxon>Acinetobacter</taxon>
    </lineage>
</organism>
<keyword id="KW-0997">Cell inner membrane</keyword>
<keyword id="KW-1003">Cell membrane</keyword>
<keyword id="KW-0472">Membrane</keyword>
<keyword id="KW-0346">Stress response</keyword>
<keyword id="KW-0812">Transmembrane</keyword>
<keyword id="KW-1133">Transmembrane helix</keyword>
<keyword id="KW-0813">Transport</keyword>
<proteinExistence type="evidence at protein level"/>
<comment type="function">
    <text evidence="2">Uptake of choline in the presence of high salinity. May primarily serve for osmoprotection.</text>
</comment>
<comment type="subcellular location">
    <subcellularLocation>
        <location evidence="5">Cell inner membrane</location>
        <topology evidence="1">Multi-pass membrane protein</topology>
    </subcellularLocation>
</comment>
<comment type="disruption phenotype">
    <text evidence="2">Mutant is impaired in osmo-dependent choline uptake activity. The betT1/betT2 double mutant is completely impaired in choline transport.</text>
</comment>
<comment type="similarity">
    <text evidence="4">Belongs to the BCCT transporter (TC 2.A.15) family.</text>
</comment>
<dbReference type="EMBL" id="CR543861">
    <property type="protein sequence ID" value="CAG67903.1"/>
    <property type="molecule type" value="Genomic_DNA"/>
</dbReference>
<dbReference type="RefSeq" id="WP_011182197.1">
    <property type="nucleotide sequence ID" value="NC_005966.1"/>
</dbReference>
<dbReference type="SMR" id="Q6FDF5"/>
<dbReference type="STRING" id="202950.GCA_001485005_01349"/>
<dbReference type="GeneID" id="45233458"/>
<dbReference type="KEGG" id="aci:ACIAD1012"/>
<dbReference type="eggNOG" id="COG1292">
    <property type="taxonomic scope" value="Bacteria"/>
</dbReference>
<dbReference type="HOGENOM" id="CLU_010118_3_1_6"/>
<dbReference type="OrthoDB" id="9775735at2"/>
<dbReference type="BioCyc" id="ASP62977:ACIAD_RS04665-MONOMER"/>
<dbReference type="Proteomes" id="UP000000430">
    <property type="component" value="Chromosome"/>
</dbReference>
<dbReference type="GO" id="GO:0005886">
    <property type="term" value="C:plasma membrane"/>
    <property type="evidence" value="ECO:0007669"/>
    <property type="project" value="UniProtKB-SubCell"/>
</dbReference>
<dbReference type="GO" id="GO:0022857">
    <property type="term" value="F:transmembrane transporter activity"/>
    <property type="evidence" value="ECO:0007669"/>
    <property type="project" value="InterPro"/>
</dbReference>
<dbReference type="InterPro" id="IPR018093">
    <property type="entry name" value="BCCT_CS"/>
</dbReference>
<dbReference type="InterPro" id="IPR000060">
    <property type="entry name" value="BCCT_transptr"/>
</dbReference>
<dbReference type="NCBIfam" id="TIGR00842">
    <property type="entry name" value="bcct"/>
    <property type="match status" value="1"/>
</dbReference>
<dbReference type="NCBIfam" id="NF007399">
    <property type="entry name" value="PRK09928.1"/>
    <property type="match status" value="1"/>
</dbReference>
<dbReference type="PANTHER" id="PTHR30047:SF7">
    <property type="entry name" value="HIGH-AFFINITY CHOLINE TRANSPORT PROTEIN"/>
    <property type="match status" value="1"/>
</dbReference>
<dbReference type="PANTHER" id="PTHR30047">
    <property type="entry name" value="HIGH-AFFINITY CHOLINE TRANSPORT PROTEIN-RELATED"/>
    <property type="match status" value="1"/>
</dbReference>
<dbReference type="Pfam" id="PF02028">
    <property type="entry name" value="BCCT"/>
    <property type="match status" value="1"/>
</dbReference>
<dbReference type="PROSITE" id="PS01303">
    <property type="entry name" value="BCCT"/>
    <property type="match status" value="1"/>
</dbReference>
<protein>
    <recommendedName>
        <fullName evidence="4">Osmo-dependent choline transporter BetT2</fullName>
    </recommendedName>
</protein>
<accession>Q6FDF5</accession>